<comment type="function">
    <text evidence="1">Catalyzes the attachment of alanine to tRNA(Ala) in a two-step reaction: alanine is first activated by ATP to form Ala-AMP and then transferred to the acceptor end of tRNA(Ala). Also edits incorrectly charged Ser-tRNA(Ala) and Gly-tRNA(Ala) via its editing domain.</text>
</comment>
<comment type="catalytic activity">
    <reaction evidence="1">
        <text>tRNA(Ala) + L-alanine + ATP = L-alanyl-tRNA(Ala) + AMP + diphosphate</text>
        <dbReference type="Rhea" id="RHEA:12540"/>
        <dbReference type="Rhea" id="RHEA-COMP:9657"/>
        <dbReference type="Rhea" id="RHEA-COMP:9923"/>
        <dbReference type="ChEBI" id="CHEBI:30616"/>
        <dbReference type="ChEBI" id="CHEBI:33019"/>
        <dbReference type="ChEBI" id="CHEBI:57972"/>
        <dbReference type="ChEBI" id="CHEBI:78442"/>
        <dbReference type="ChEBI" id="CHEBI:78497"/>
        <dbReference type="ChEBI" id="CHEBI:456215"/>
        <dbReference type="EC" id="6.1.1.7"/>
    </reaction>
</comment>
<comment type="cofactor">
    <cofactor evidence="1">
        <name>Zn(2+)</name>
        <dbReference type="ChEBI" id="CHEBI:29105"/>
    </cofactor>
    <text evidence="1">Binds 1 zinc ion per subunit.</text>
</comment>
<comment type="subcellular location">
    <subcellularLocation>
        <location evidence="1">Cytoplasm</location>
    </subcellularLocation>
</comment>
<comment type="domain">
    <text evidence="1">Consists of three domains; the N-terminal catalytic domain, the editing domain and the C-terminal C-Ala domain. The editing domain removes incorrectly charged amino acids, while the C-Ala domain, along with tRNA(Ala), serves as a bridge to cooperatively bring together the editing and aminoacylation centers thus stimulating deacylation of misacylated tRNAs.</text>
</comment>
<comment type="similarity">
    <text evidence="1">Belongs to the class-II aminoacyl-tRNA synthetase family.</text>
</comment>
<gene>
    <name evidence="1" type="primary">alaS</name>
    <name type="ordered locus">HQ_3670A</name>
</gene>
<proteinExistence type="inferred from homology"/>
<accession>Q18E76</accession>
<organism>
    <name type="scientific">Haloquadratum walsbyi (strain DSM 16790 / HBSQ001)</name>
    <dbReference type="NCBI Taxonomy" id="362976"/>
    <lineage>
        <taxon>Archaea</taxon>
        <taxon>Methanobacteriati</taxon>
        <taxon>Methanobacteriota</taxon>
        <taxon>Stenosarchaea group</taxon>
        <taxon>Halobacteria</taxon>
        <taxon>Halobacteriales</taxon>
        <taxon>Haloferacaceae</taxon>
        <taxon>Haloquadratum</taxon>
    </lineage>
</organism>
<keyword id="KW-0030">Aminoacyl-tRNA synthetase</keyword>
<keyword id="KW-0067">ATP-binding</keyword>
<keyword id="KW-0963">Cytoplasm</keyword>
<keyword id="KW-0436">Ligase</keyword>
<keyword id="KW-0479">Metal-binding</keyword>
<keyword id="KW-0547">Nucleotide-binding</keyword>
<keyword id="KW-0648">Protein biosynthesis</keyword>
<keyword id="KW-1185">Reference proteome</keyword>
<keyword id="KW-0694">RNA-binding</keyword>
<keyword id="KW-0820">tRNA-binding</keyword>
<keyword id="KW-0862">Zinc</keyword>
<protein>
    <recommendedName>
        <fullName evidence="1">Alanine--tRNA ligase</fullName>
        <ecNumber evidence="1">6.1.1.7</ecNumber>
    </recommendedName>
    <alternativeName>
        <fullName evidence="1">Alanyl-tRNA synthetase</fullName>
        <shortName evidence="1">AlaRS</shortName>
    </alternativeName>
</protein>
<name>SYA_HALWD</name>
<sequence>MSELESEYRLEYFETEGFHRKQCPVTDVYFWTRDPDRETCGEPPADDYSFIDNPGFDDQYSLSGMREEFLSFFESRDHDRIEPYPVAANRWRDDVLLTQASIYDFQPLVTSGQTPPPANPLCISQPCIRMQDIDNVGKTGRHTMAFEMMAHHAFNTREDASDEYAYTGEVYWKDETVRLCDAFFEHMGADLTEITYIEDPWVGGGNAGPAFEVLYRGAELATLVFMSMEQDESGEYEMKDGNRYSPMDTYVVDTGYGLERWAWVSQGTPTVYEAVYPDTIEFLKNDADVTHTTDEKELIQQAAMLSGYLDIDEIDNLASARADVADELDVDPSVLTDLLEPLESIYAIADHYRTLAYMFGDEIVPSNVGTGYLTRMVLRRTQRLIDDIGIDAPLDELVDMQAERLGYENRDTIRDIVRTEDRKYRETLSRGRRRVETLADEYADRNESIPVDELIELYDSHGIQPDMVTEIASDRGATVEIPDDFYSLVADRHTDDDTTETIEKRRDRLADLPETDRLYYDDQTGTEFEAVVLDIFEQDTGYDIVLDQTMFYPEGGGQPADHGTLTTEEETIEITDVKAQDGVILHQATENPGKGDFIRGQLDVERRRRLMQHHTATHIIGHAARKVLGDHVRQAGAQKGTDSARFDLTHYERINRIEAKTIESVANDIIRQNISVRQDWPDRHEAENEHGFDLYQGGIPPGQNIRTITIGDDIQACGGTHVTRTGDIGTIKILTTEPVQDGVERIVFAAGDAAIDAVQTTEDALYDAADVLDVTPEHVPETADRFFTEWKERGKTIDKLKSELAEARAQGVTADAVSIDGIDAVIKTVNGDADELRKTANAIVDEDAVAVLGSDVDGSAQFVVGVPEDIGINAGDVVGQLARKVGGGGGGPPDFAQGGGPDAASLEVALDDATSVLRSMHET</sequence>
<evidence type="ECO:0000255" key="1">
    <source>
        <dbReference type="HAMAP-Rule" id="MF_00036"/>
    </source>
</evidence>
<evidence type="ECO:0000256" key="2">
    <source>
        <dbReference type="SAM" id="MobiDB-lite"/>
    </source>
</evidence>
<reference key="1">
    <citation type="journal article" date="2006" name="BMC Genomics">
        <title>The genome of the square archaeon Haloquadratum walsbyi: life at the limits of water activity.</title>
        <authorList>
            <person name="Bolhuis H."/>
            <person name="Palm P."/>
            <person name="Wende A."/>
            <person name="Falb M."/>
            <person name="Rampp M."/>
            <person name="Rodriguez-Valera F."/>
            <person name="Pfeiffer F."/>
            <person name="Oesterhelt D."/>
        </authorList>
    </citation>
    <scope>NUCLEOTIDE SEQUENCE [LARGE SCALE GENOMIC DNA]</scope>
    <source>
        <strain>DSM 16790 / HBSQ001</strain>
    </source>
</reference>
<dbReference type="EC" id="6.1.1.7" evidence="1"/>
<dbReference type="EMBL" id="AM180088">
    <property type="protein sequence ID" value="CAJ53757.1"/>
    <property type="molecule type" value="Genomic_DNA"/>
</dbReference>
<dbReference type="RefSeq" id="WP_011572839.1">
    <property type="nucleotide sequence ID" value="NC_008212.1"/>
</dbReference>
<dbReference type="SMR" id="Q18E76"/>
<dbReference type="STRING" id="362976.HQ_3670A"/>
<dbReference type="GeneID" id="4193696"/>
<dbReference type="KEGG" id="hwa:HQ_3670A"/>
<dbReference type="eggNOG" id="arCOG01255">
    <property type="taxonomic scope" value="Archaea"/>
</dbReference>
<dbReference type="HOGENOM" id="CLU_004485_4_0_2"/>
<dbReference type="Proteomes" id="UP000001975">
    <property type="component" value="Chromosome"/>
</dbReference>
<dbReference type="GO" id="GO:0005737">
    <property type="term" value="C:cytoplasm"/>
    <property type="evidence" value="ECO:0007669"/>
    <property type="project" value="UniProtKB-SubCell"/>
</dbReference>
<dbReference type="GO" id="GO:0004813">
    <property type="term" value="F:alanine-tRNA ligase activity"/>
    <property type="evidence" value="ECO:0007669"/>
    <property type="project" value="UniProtKB-UniRule"/>
</dbReference>
<dbReference type="GO" id="GO:0002161">
    <property type="term" value="F:aminoacyl-tRNA deacylase activity"/>
    <property type="evidence" value="ECO:0007669"/>
    <property type="project" value="UniProtKB-ARBA"/>
</dbReference>
<dbReference type="GO" id="GO:0005524">
    <property type="term" value="F:ATP binding"/>
    <property type="evidence" value="ECO:0007669"/>
    <property type="project" value="UniProtKB-UniRule"/>
</dbReference>
<dbReference type="GO" id="GO:0000049">
    <property type="term" value="F:tRNA binding"/>
    <property type="evidence" value="ECO:0007669"/>
    <property type="project" value="UniProtKB-KW"/>
</dbReference>
<dbReference type="GO" id="GO:0008270">
    <property type="term" value="F:zinc ion binding"/>
    <property type="evidence" value="ECO:0007669"/>
    <property type="project" value="UniProtKB-UniRule"/>
</dbReference>
<dbReference type="GO" id="GO:0006419">
    <property type="term" value="P:alanyl-tRNA aminoacylation"/>
    <property type="evidence" value="ECO:0007669"/>
    <property type="project" value="UniProtKB-UniRule"/>
</dbReference>
<dbReference type="FunFam" id="3.10.310.40:FF:000001">
    <property type="entry name" value="Alanine--tRNA ligase"/>
    <property type="match status" value="1"/>
</dbReference>
<dbReference type="FunFam" id="3.30.980.10:FF:000004">
    <property type="entry name" value="Alanine--tRNA ligase, cytoplasmic"/>
    <property type="match status" value="1"/>
</dbReference>
<dbReference type="Gene3D" id="2.40.30.130">
    <property type="match status" value="1"/>
</dbReference>
<dbReference type="Gene3D" id="3.10.310.40">
    <property type="match status" value="1"/>
</dbReference>
<dbReference type="Gene3D" id="3.30.54.20">
    <property type="match status" value="1"/>
</dbReference>
<dbReference type="Gene3D" id="6.10.250.550">
    <property type="match status" value="1"/>
</dbReference>
<dbReference type="Gene3D" id="3.30.930.10">
    <property type="entry name" value="Bira Bifunctional Protein, Domain 2"/>
    <property type="match status" value="1"/>
</dbReference>
<dbReference type="Gene3D" id="3.30.980.10">
    <property type="entry name" value="Threonyl-trna Synthetase, Chain A, domain 2"/>
    <property type="match status" value="1"/>
</dbReference>
<dbReference type="HAMAP" id="MF_00036_A">
    <property type="entry name" value="Ala_tRNA_synth_A"/>
    <property type="match status" value="1"/>
</dbReference>
<dbReference type="InterPro" id="IPR045864">
    <property type="entry name" value="aa-tRNA-synth_II/BPL/LPL"/>
</dbReference>
<dbReference type="InterPro" id="IPR002318">
    <property type="entry name" value="Ala-tRNA-lgiase_IIc"/>
</dbReference>
<dbReference type="InterPro" id="IPR018162">
    <property type="entry name" value="Ala-tRNA-ligase_IIc_anticod-bd"/>
</dbReference>
<dbReference type="InterPro" id="IPR018165">
    <property type="entry name" value="Ala-tRNA-synth_IIc_core"/>
</dbReference>
<dbReference type="InterPro" id="IPR018164">
    <property type="entry name" value="Ala-tRNA-synth_IIc_N"/>
</dbReference>
<dbReference type="InterPro" id="IPR022429">
    <property type="entry name" value="Ala-tRNA_lgiase_arc"/>
</dbReference>
<dbReference type="InterPro" id="IPR050058">
    <property type="entry name" value="Ala-tRNA_ligase"/>
</dbReference>
<dbReference type="InterPro" id="IPR003156">
    <property type="entry name" value="DHHA1_dom"/>
</dbReference>
<dbReference type="InterPro" id="IPR018163">
    <property type="entry name" value="Thr/Ala-tRNA-synth_IIc_edit"/>
</dbReference>
<dbReference type="InterPro" id="IPR009000">
    <property type="entry name" value="Transl_B-barrel_sf"/>
</dbReference>
<dbReference type="InterPro" id="IPR012947">
    <property type="entry name" value="tRNA_SAD"/>
</dbReference>
<dbReference type="NCBIfam" id="TIGR03683">
    <property type="entry name" value="A-tRNA_syn_arch"/>
    <property type="match status" value="1"/>
</dbReference>
<dbReference type="NCBIfam" id="TIGR00344">
    <property type="entry name" value="alaS"/>
    <property type="match status" value="1"/>
</dbReference>
<dbReference type="PANTHER" id="PTHR11777:SF9">
    <property type="entry name" value="ALANINE--TRNA LIGASE, CYTOPLASMIC"/>
    <property type="match status" value="1"/>
</dbReference>
<dbReference type="PANTHER" id="PTHR11777">
    <property type="entry name" value="ALANYL-TRNA SYNTHETASE"/>
    <property type="match status" value="1"/>
</dbReference>
<dbReference type="Pfam" id="PF02272">
    <property type="entry name" value="DHHA1"/>
    <property type="match status" value="1"/>
</dbReference>
<dbReference type="Pfam" id="PF01411">
    <property type="entry name" value="tRNA-synt_2c"/>
    <property type="match status" value="1"/>
</dbReference>
<dbReference type="Pfam" id="PF07973">
    <property type="entry name" value="tRNA_SAD"/>
    <property type="match status" value="1"/>
</dbReference>
<dbReference type="PRINTS" id="PR00980">
    <property type="entry name" value="TRNASYNTHALA"/>
</dbReference>
<dbReference type="SMART" id="SM00863">
    <property type="entry name" value="tRNA_SAD"/>
    <property type="match status" value="1"/>
</dbReference>
<dbReference type="SUPFAM" id="SSF55681">
    <property type="entry name" value="Class II aaRS and biotin synthetases"/>
    <property type="match status" value="1"/>
</dbReference>
<dbReference type="SUPFAM" id="SSF101353">
    <property type="entry name" value="Putative anticodon-binding domain of alanyl-tRNA synthetase (AlaRS)"/>
    <property type="match status" value="1"/>
</dbReference>
<dbReference type="SUPFAM" id="SSF55186">
    <property type="entry name" value="ThrRS/AlaRS common domain"/>
    <property type="match status" value="1"/>
</dbReference>
<dbReference type="SUPFAM" id="SSF50447">
    <property type="entry name" value="Translation proteins"/>
    <property type="match status" value="1"/>
</dbReference>
<dbReference type="PROSITE" id="PS50860">
    <property type="entry name" value="AA_TRNA_LIGASE_II_ALA"/>
    <property type="match status" value="1"/>
</dbReference>
<feature type="chain" id="PRO_1000074504" description="Alanine--tRNA ligase">
    <location>
        <begin position="1"/>
        <end position="923"/>
    </location>
</feature>
<feature type="region of interest" description="Disordered" evidence="2">
    <location>
        <begin position="884"/>
        <end position="903"/>
    </location>
</feature>
<feature type="compositionally biased region" description="Gly residues" evidence="2">
    <location>
        <begin position="885"/>
        <end position="901"/>
    </location>
</feature>
<feature type="binding site" evidence="1">
    <location>
        <position position="614"/>
    </location>
    <ligand>
        <name>Zn(2+)</name>
        <dbReference type="ChEBI" id="CHEBI:29105"/>
    </ligand>
</feature>
<feature type="binding site" evidence="1">
    <location>
        <position position="618"/>
    </location>
    <ligand>
        <name>Zn(2+)</name>
        <dbReference type="ChEBI" id="CHEBI:29105"/>
    </ligand>
</feature>
<feature type="binding site" evidence="1">
    <location>
        <position position="717"/>
    </location>
    <ligand>
        <name>Zn(2+)</name>
        <dbReference type="ChEBI" id="CHEBI:29105"/>
    </ligand>
</feature>
<feature type="binding site" evidence="1">
    <location>
        <position position="721"/>
    </location>
    <ligand>
        <name>Zn(2+)</name>
        <dbReference type="ChEBI" id="CHEBI:29105"/>
    </ligand>
</feature>